<gene>
    <name type="ordered locus">HI_1728</name>
</gene>
<comment type="subcellular location">
    <subcellularLocation>
        <location evidence="2">Cell membrane</location>
        <topology evidence="2">Multi-pass membrane protein</topology>
    </subcellularLocation>
</comment>
<comment type="similarity">
    <text evidence="2">Belongs to the NRAMP family.</text>
</comment>
<proteinExistence type="inferred from homology"/>
<feature type="chain" id="PRO_0000099776" description="Uncharacterized membrane protein HI_1728">
    <location>
        <begin position="1"/>
        <end position="397"/>
    </location>
</feature>
<feature type="transmembrane region" description="Helical" evidence="1">
    <location>
        <begin position="9"/>
        <end position="29"/>
    </location>
</feature>
<feature type="transmembrane region" description="Helical" evidence="1">
    <location>
        <begin position="38"/>
        <end position="58"/>
    </location>
</feature>
<feature type="transmembrane region" description="Helical" evidence="1">
    <location>
        <begin position="85"/>
        <end position="105"/>
    </location>
</feature>
<feature type="transmembrane region" description="Helical" evidence="1">
    <location>
        <begin position="112"/>
        <end position="132"/>
    </location>
</feature>
<feature type="transmembrane region" description="Helical" evidence="1">
    <location>
        <begin position="148"/>
        <end position="168"/>
    </location>
</feature>
<feature type="transmembrane region" description="Helical" evidence="1">
    <location>
        <begin position="182"/>
        <end position="202"/>
    </location>
</feature>
<feature type="transmembrane region" description="Helical" evidence="1">
    <location>
        <begin position="226"/>
        <end position="246"/>
    </location>
</feature>
<feature type="transmembrane region" description="Helical" evidence="1">
    <location>
        <begin position="271"/>
        <end position="291"/>
    </location>
</feature>
<feature type="transmembrane region" description="Helical" evidence="1">
    <location>
        <begin position="310"/>
        <end position="330"/>
    </location>
</feature>
<feature type="transmembrane region" description="Helical" evidence="1">
    <location>
        <begin position="331"/>
        <end position="351"/>
    </location>
</feature>
<feature type="transmembrane region" description="Helical" evidence="1">
    <location>
        <begin position="365"/>
        <end position="385"/>
    </location>
</feature>
<organism>
    <name type="scientific">Haemophilus influenzae (strain ATCC 51907 / DSM 11121 / KW20 / Rd)</name>
    <dbReference type="NCBI Taxonomy" id="71421"/>
    <lineage>
        <taxon>Bacteria</taxon>
        <taxon>Pseudomonadati</taxon>
        <taxon>Pseudomonadota</taxon>
        <taxon>Gammaproteobacteria</taxon>
        <taxon>Pasteurellales</taxon>
        <taxon>Pasteurellaceae</taxon>
        <taxon>Haemophilus</taxon>
    </lineage>
</organism>
<name>Y1728_HAEIN</name>
<dbReference type="EMBL" id="L42023">
    <property type="protein sequence ID" value="AAC23374.1"/>
    <property type="molecule type" value="Genomic_DNA"/>
</dbReference>
<dbReference type="PIR" id="G64138">
    <property type="entry name" value="G64138"/>
</dbReference>
<dbReference type="RefSeq" id="NP_439869.1">
    <property type="nucleotide sequence ID" value="NC_000907.1"/>
</dbReference>
<dbReference type="SMR" id="O05087"/>
<dbReference type="STRING" id="71421.HI_1728"/>
<dbReference type="EnsemblBacteria" id="AAC23374">
    <property type="protein sequence ID" value="AAC23374"/>
    <property type="gene ID" value="HI_1728"/>
</dbReference>
<dbReference type="KEGG" id="hin:HI_1728"/>
<dbReference type="PATRIC" id="fig|71421.8.peg.1807"/>
<dbReference type="eggNOG" id="COG1914">
    <property type="taxonomic scope" value="Bacteria"/>
</dbReference>
<dbReference type="HOGENOM" id="CLU_055818_0_0_6"/>
<dbReference type="OrthoDB" id="141480at2"/>
<dbReference type="PhylomeDB" id="O05087"/>
<dbReference type="BioCyc" id="HINF71421:G1GJ1-1743-MONOMER"/>
<dbReference type="Proteomes" id="UP000000579">
    <property type="component" value="Chromosome"/>
</dbReference>
<dbReference type="GO" id="GO:0005886">
    <property type="term" value="C:plasma membrane"/>
    <property type="evidence" value="ECO:0000318"/>
    <property type="project" value="GO_Central"/>
</dbReference>
<dbReference type="GO" id="GO:0015086">
    <property type="term" value="F:cadmium ion transmembrane transporter activity"/>
    <property type="evidence" value="ECO:0000318"/>
    <property type="project" value="GO_Central"/>
</dbReference>
<dbReference type="GO" id="GO:0005384">
    <property type="term" value="F:manganese ion transmembrane transporter activity"/>
    <property type="evidence" value="ECO:0000318"/>
    <property type="project" value="GO_Central"/>
</dbReference>
<dbReference type="GO" id="GO:0034755">
    <property type="term" value="P:iron ion transmembrane transport"/>
    <property type="evidence" value="ECO:0000318"/>
    <property type="project" value="GO_Central"/>
</dbReference>
<dbReference type="GO" id="GO:0006828">
    <property type="term" value="P:manganese ion transport"/>
    <property type="evidence" value="ECO:0000318"/>
    <property type="project" value="GO_Central"/>
</dbReference>
<dbReference type="InterPro" id="IPR001046">
    <property type="entry name" value="NRAMP_fam"/>
</dbReference>
<dbReference type="PANTHER" id="PTHR11706">
    <property type="entry name" value="SOLUTE CARRIER PROTEIN FAMILY 11 MEMBER"/>
    <property type="match status" value="1"/>
</dbReference>
<dbReference type="PANTHER" id="PTHR11706:SF2">
    <property type="entry name" value="TRANSPORTER PROTEIN"/>
    <property type="match status" value="1"/>
</dbReference>
<dbReference type="Pfam" id="PF01566">
    <property type="entry name" value="Nramp"/>
    <property type="match status" value="1"/>
</dbReference>
<keyword id="KW-1003">Cell membrane</keyword>
<keyword id="KW-0472">Membrane</keyword>
<keyword id="KW-1185">Reference proteome</keyword>
<keyword id="KW-0812">Transmembrane</keyword>
<keyword id="KW-1133">Transmembrane helix</keyword>
<evidence type="ECO:0000255" key="1"/>
<evidence type="ECO:0000305" key="2"/>
<accession>O05087</accession>
<reference key="1">
    <citation type="journal article" date="1995" name="Science">
        <title>Whole-genome random sequencing and assembly of Haemophilus influenzae Rd.</title>
        <authorList>
            <person name="Fleischmann R.D."/>
            <person name="Adams M.D."/>
            <person name="White O."/>
            <person name="Clayton R.A."/>
            <person name="Kirkness E.F."/>
            <person name="Kerlavage A.R."/>
            <person name="Bult C.J."/>
            <person name="Tomb J.-F."/>
            <person name="Dougherty B.A."/>
            <person name="Merrick J.M."/>
            <person name="McKenney K."/>
            <person name="Sutton G.G."/>
            <person name="FitzHugh W."/>
            <person name="Fields C.A."/>
            <person name="Gocayne J.D."/>
            <person name="Scott J.D."/>
            <person name="Shirley R."/>
            <person name="Liu L.-I."/>
            <person name="Glodek A."/>
            <person name="Kelley J.M."/>
            <person name="Weidman J.F."/>
            <person name="Phillips C.A."/>
            <person name="Spriggs T."/>
            <person name="Hedblom E."/>
            <person name="Cotton M.D."/>
            <person name="Utterback T.R."/>
            <person name="Hanna M.C."/>
            <person name="Nguyen D.T."/>
            <person name="Saudek D.M."/>
            <person name="Brandon R.C."/>
            <person name="Fine L.D."/>
            <person name="Fritchman J.L."/>
            <person name="Fuhrmann J.L."/>
            <person name="Geoghagen N.S.M."/>
            <person name="Gnehm C.L."/>
            <person name="McDonald L.A."/>
            <person name="Small K.V."/>
            <person name="Fraser C.M."/>
            <person name="Smith H.O."/>
            <person name="Venter J.C."/>
        </authorList>
    </citation>
    <scope>NUCLEOTIDE SEQUENCE [LARGE SCALE GENOMIC DNA]</scope>
    <source>
        <strain>ATCC 51907 / DSM 11121 / KW20 / Rd</strain>
    </source>
</reference>
<sequence>MASITHRRNAVLGAAFLMATSAIGPGFLTQTATFTNTLLASFGFVILLSILLDIGAQLNIWRIVIVSGKRAQDISNAVFPKAGYFLAALIVMGGLAFNIGNVGGAGLGLNSIFGIAPEMGAVISGIIAILIFLRKEAGLLMDRFAQLMGFIMVVLTFYVMFKTEPPVVEAAYHSFIPEQIDPIAIVTLVGGTVGGYITFAGAHRLLDAGIQGEKAMAEVSRSSVSAILIASTMRVVLFLAVLGVVSKGVSLNPKNPAETPFEYVAGNFGQVLFGVVIWAASVTSVIGAAYTSVSFLTTLCPTIERNRNRWIIAFIVISTVVLVTVGKPAAVLVFVGTLNGLILPIALALILLAAYRSDIVGTYKHPVFLAFSGWFVVIIMAILSGKTIISYISSFFS</sequence>
<protein>
    <recommendedName>
        <fullName>Uncharacterized membrane protein HI_1728</fullName>
    </recommendedName>
</protein>